<gene>
    <name evidence="6" type="primary">fCNMT</name>
</gene>
<evidence type="ECO:0000250" key="1">
    <source>
        <dbReference type="UniProtKB" id="C3SBW0"/>
    </source>
</evidence>
<evidence type="ECO:0000250" key="2">
    <source>
        <dbReference type="UniProtKB" id="P9WPB7"/>
    </source>
</evidence>
<evidence type="ECO:0000250" key="3">
    <source>
        <dbReference type="UniProtKB" id="Q108P1"/>
    </source>
</evidence>
<evidence type="ECO:0000269" key="4">
    <source>
    </source>
</evidence>
<evidence type="ECO:0000269" key="5">
    <source>
    </source>
</evidence>
<evidence type="ECO:0000303" key="6">
    <source>
    </source>
</evidence>
<evidence type="ECO:0000305" key="7"/>
<organism>
    <name type="scientific">Thalictrum flavum subsp. glaucum</name>
    <name type="common">Yellow meadow rue</name>
    <dbReference type="NCBI Taxonomy" id="150095"/>
    <lineage>
        <taxon>Eukaryota</taxon>
        <taxon>Viridiplantae</taxon>
        <taxon>Streptophyta</taxon>
        <taxon>Embryophyta</taxon>
        <taxon>Tracheophyta</taxon>
        <taxon>Spermatophyta</taxon>
        <taxon>Magnoliopsida</taxon>
        <taxon>Ranunculales</taxon>
        <taxon>Ranunculaceae</taxon>
        <taxon>Thalictroideae</taxon>
        <taxon>Thalictrum</taxon>
    </lineage>
</organism>
<keyword id="KW-0963">Cytoplasm</keyword>
<keyword id="KW-0489">Methyltransferase</keyword>
<keyword id="KW-0949">S-adenosyl-L-methionine</keyword>
<keyword id="KW-0808">Transferase</keyword>
<accession>Q5C9L6</accession>
<protein>
    <recommendedName>
        <fullName evidence="6">(S)-coclaurine N-methyltransferase</fullName>
        <shortName evidence="6">TfCNMT</shortName>
        <ecNumber evidence="5">2.1.1.140</ecNumber>
    </recommendedName>
</protein>
<proteinExistence type="evidence at protein level"/>
<name>CNMT_THLFG</name>
<comment type="function">
    <text evidence="5">Involved in the biosynthesis of protoberberine alkaloids (PubMed:19624470). N-methyltransferase with a substrate preference for (R,S)-norreticuline but also active with dimethoxytetrahydroisoquinoline (PubMed:19624470).</text>
</comment>
<comment type="catalytic activity">
    <reaction evidence="5">
        <text>norreticuline + S-adenosyl-L-methionine = reticuline + S-adenosyl-L-homocysteine + H(+)</text>
        <dbReference type="Rhea" id="RHEA:76055"/>
        <dbReference type="ChEBI" id="CHEBI:15378"/>
        <dbReference type="ChEBI" id="CHEBI:57856"/>
        <dbReference type="ChEBI" id="CHEBI:59789"/>
        <dbReference type="ChEBI" id="CHEBI:194517"/>
        <dbReference type="ChEBI" id="CHEBI:194518"/>
    </reaction>
</comment>
<comment type="catalytic activity">
    <reaction evidence="5">
        <text>(S)-coclaurine + S-adenosyl-L-methionine = (S)-N-methylcoclaurine + S-adenosyl-L-homocysteine + H(+)</text>
        <dbReference type="Rhea" id="RHEA:17409"/>
        <dbReference type="ChEBI" id="CHEBI:15378"/>
        <dbReference type="ChEBI" id="CHEBI:57581"/>
        <dbReference type="ChEBI" id="CHEBI:57856"/>
        <dbReference type="ChEBI" id="CHEBI:57993"/>
        <dbReference type="ChEBI" id="CHEBI:59789"/>
        <dbReference type="EC" id="2.1.1.140"/>
    </reaction>
</comment>
<comment type="catalytic activity">
    <reaction evidence="5">
        <text>heliamine + S-adenosyl-L-methionine = N-methylheliamine + S-adenosyl-L-homocysteine + H(+)</text>
        <dbReference type="Rhea" id="RHEA:76059"/>
        <dbReference type="ChEBI" id="CHEBI:15378"/>
        <dbReference type="ChEBI" id="CHEBI:57856"/>
        <dbReference type="ChEBI" id="CHEBI:59789"/>
        <dbReference type="ChEBI" id="CHEBI:194515"/>
        <dbReference type="ChEBI" id="CHEBI:194516"/>
    </reaction>
</comment>
<comment type="biophysicochemical properties">
    <kinetics>
        <KM evidence="5">41 uM for (R,S)-norreticuline</KM>
        <KM evidence="5">43 uM for S-adenosyl-L-methionine</KM>
        <Vmax evidence="5">1.1 pmol/sec/mg enzyme toward (R,S)-norreticuline</Vmax>
        <Vmax evidence="5">1.1 pmol/sec/mg enzyme toward S-adenosyl-L-methionine</Vmax>
    </kinetics>
</comment>
<comment type="pathway">
    <text evidence="5">Alkaloid biosynthesis.</text>
</comment>
<comment type="subunit">
    <text evidence="3">Homodimer.</text>
</comment>
<comment type="subcellular location">
    <subcellularLocation>
        <location evidence="7">Cytoplasm</location>
    </subcellularLocation>
</comment>
<comment type="tissue specificity">
    <text evidence="4">Highly expressed in rhizomes. Detected in roots, petioles, flower buds and leaves. Expressed between the developing stele and ground tissues near the root apical meristem, in the immature endodermis, the pericycle and the spokes of developing xylem in the apical region of the root and in the protoderm of leaf primordia in rhizomes.</text>
</comment>
<comment type="induction">
    <text evidence="5">Not induced by elicitor treatment.</text>
</comment>
<comment type="similarity">
    <text evidence="7">Belongs to the CFA/CMAS family.</text>
</comment>
<sequence length="361" mass="41903">MAVEGKQVAPKKAIIVELLKKLELGLVPDDEIKKLIRIQLGRRLQWGCKSTYEEQIAQLVNLTHSLRQMKIATEVETLDDQMYEVPIDFLKIMNGSNLKGSCCYFKNDSTTLDEAEIAMLELYCERAQIKDGHSVLDLGCGQGALTLYVAQKYKNSRVTAVTNSVSQKEFIEEESRKRNLSNVEVLLADITTHKMPDTYDRILVVELFEHMKNYELLLRKIKEWMAKDGLLFVEHICHKTFAYHYEPIDEDDWFTEYVFPAGTMIIPSASFFLYFQDDVSVVNHWTLSGKHFSRTNEEWLKRLDANVELIKPMFVTITGQCRQEAMKLINYWRGFCLSGMEMFGYNNGEEWMASHVLFKKK</sequence>
<feature type="chain" id="PRO_0000411113" description="(S)-coclaurine N-methyltransferase">
    <location>
        <begin position="1"/>
        <end position="361"/>
    </location>
</feature>
<feature type="active site" evidence="2">
    <location>
        <position position="336"/>
    </location>
</feature>
<feature type="binding site" evidence="1">
    <location>
        <position position="101"/>
    </location>
    <ligand>
        <name>S-adenosyl-L-methionine</name>
        <dbReference type="ChEBI" id="CHEBI:59789"/>
    </ligand>
</feature>
<feature type="binding site" evidence="1">
    <location>
        <position position="139"/>
    </location>
    <ligand>
        <name>S-adenosyl-L-methionine</name>
        <dbReference type="ChEBI" id="CHEBI:59789"/>
    </ligand>
</feature>
<feature type="binding site" evidence="1">
    <location>
        <position position="163"/>
    </location>
    <ligand>
        <name>S-adenosyl-L-methionine</name>
        <dbReference type="ChEBI" id="CHEBI:59789"/>
    </ligand>
</feature>
<feature type="binding site" evidence="1">
    <location>
        <position position="167"/>
    </location>
    <ligand>
        <name>S-adenosyl-L-methionine</name>
        <dbReference type="ChEBI" id="CHEBI:59789"/>
    </ligand>
</feature>
<feature type="binding site" evidence="1">
    <location>
        <position position="189"/>
    </location>
    <ligand>
        <name>S-adenosyl-L-methionine</name>
        <dbReference type="ChEBI" id="CHEBI:59789"/>
    </ligand>
</feature>
<feature type="binding site" evidence="1">
    <location>
        <position position="190"/>
    </location>
    <ligand>
        <name>S-adenosyl-L-methionine</name>
        <dbReference type="ChEBI" id="CHEBI:59789"/>
    </ligand>
</feature>
<feature type="binding site" evidence="1">
    <location>
        <position position="205"/>
    </location>
    <ligand>
        <name>S-adenosyl-L-methionine</name>
        <dbReference type="ChEBI" id="CHEBI:59789"/>
    </ligand>
</feature>
<reference key="1">
    <citation type="journal article" date="2005" name="Plant Cell">
        <title>Cell type-specific localization of transcripts encoding nine consecutive enzymes involved in protoberberine alkaloid biosynthesis.</title>
        <authorList>
            <person name="Samanani N."/>
            <person name="Park S.U."/>
            <person name="Facchini P.J."/>
        </authorList>
    </citation>
    <scope>NUCLEOTIDE SEQUENCE [MRNA]</scope>
    <scope>TISSUE SPECIFICITY</scope>
</reference>
<reference key="2">
    <citation type="journal article" date="2009" name="Plant J.">
        <title>Targeted metabolite and transcript profiling for elucidating enzyme function: isolation of novel N-methyltransferases from three benzylisoquinoline alkaloid-producing species.</title>
        <authorList>
            <consortium name="Natural Products Genomics Resource (NAPGEN)"/>
            <person name="Liscombe D.K."/>
            <person name="Ziegler J."/>
            <person name="Schmidt J."/>
            <person name="Ammer C."/>
            <person name="Facchini P.J."/>
        </authorList>
    </citation>
    <scope>NUCLEOTIDE SEQUENCE [MRNA]</scope>
    <scope>FUNCTION</scope>
    <scope>CATALYTIC ACTIVITY</scope>
    <scope>INDUCTION</scope>
    <scope>BIOPHYSICOCHEMICAL PROPERTIES</scope>
    <scope>PATHWAY</scope>
</reference>
<dbReference type="EC" id="2.1.1.140" evidence="5"/>
<dbReference type="EMBL" id="AY610508">
    <property type="protein sequence ID" value="AAU20766.1"/>
    <property type="molecule type" value="mRNA"/>
</dbReference>
<dbReference type="SMR" id="Q5C9L6"/>
<dbReference type="KEGG" id="ag:AAU20766"/>
<dbReference type="SABIO-RK" id="Q5C9L6"/>
<dbReference type="GO" id="GO:0005737">
    <property type="term" value="C:cytoplasm"/>
    <property type="evidence" value="ECO:0007669"/>
    <property type="project" value="UniProtKB-SubCell"/>
</dbReference>
<dbReference type="GO" id="GO:0030794">
    <property type="term" value="F:(S)-coclaurine-N-methyltransferase activity"/>
    <property type="evidence" value="ECO:0007669"/>
    <property type="project" value="UniProtKB-EC"/>
</dbReference>
<dbReference type="GO" id="GO:0032259">
    <property type="term" value="P:methylation"/>
    <property type="evidence" value="ECO:0007669"/>
    <property type="project" value="UniProtKB-KW"/>
</dbReference>
<dbReference type="CDD" id="cd02440">
    <property type="entry name" value="AdoMet_MTases"/>
    <property type="match status" value="1"/>
</dbReference>
<dbReference type="FunFam" id="3.40.50.150:FF:000554">
    <property type="entry name" value="Cation-transporting ATPase"/>
    <property type="match status" value="1"/>
</dbReference>
<dbReference type="Gene3D" id="3.40.50.150">
    <property type="entry name" value="Vaccinia Virus protein VP39"/>
    <property type="match status" value="1"/>
</dbReference>
<dbReference type="InterPro" id="IPR029063">
    <property type="entry name" value="SAM-dependent_MTases_sf"/>
</dbReference>
<dbReference type="PANTHER" id="PTHR43832">
    <property type="match status" value="1"/>
</dbReference>
<dbReference type="PANTHER" id="PTHR43832:SF1">
    <property type="entry name" value="S-ADENOSYL-L-METHIONINE-DEPENDENT METHYLTRANSFERASES SUPERFAMILY PROTEIN"/>
    <property type="match status" value="1"/>
</dbReference>
<dbReference type="Pfam" id="PF02353">
    <property type="entry name" value="CMAS"/>
    <property type="match status" value="1"/>
</dbReference>
<dbReference type="SUPFAM" id="SSF53335">
    <property type="entry name" value="S-adenosyl-L-methionine-dependent methyltransferases"/>
    <property type="match status" value="1"/>
</dbReference>